<dbReference type="EMBL" id="AF321384">
    <property type="protein sequence ID" value="AAG35074.1"/>
    <property type="molecule type" value="Genomic_DNA"/>
</dbReference>
<dbReference type="EMBL" id="AF016991">
    <property type="protein sequence ID" value="AAG33930.1"/>
    <property type="molecule type" value="Genomic_DNA"/>
</dbReference>
<dbReference type="SMR" id="Q9GJS7"/>
<dbReference type="FunCoup" id="Q9GJS7">
    <property type="interactions" value="13"/>
</dbReference>
<dbReference type="STRING" id="9483.ENSCJAP00000076265"/>
<dbReference type="Ensembl" id="ENSCJAT00000039674.5">
    <property type="protein sequence ID" value="ENSCJAP00000037558.5"/>
    <property type="gene ID" value="ENSCJAG00000020214.5"/>
</dbReference>
<dbReference type="Ensembl" id="ENSCJAT00000039678.5">
    <property type="protein sequence ID" value="ENSCJAP00000037562.2"/>
    <property type="gene ID" value="ENSCJAG00000020214.5"/>
</dbReference>
<dbReference type="GeneID" id="100388732"/>
<dbReference type="KEGG" id="cjc:100388732"/>
<dbReference type="KEGG" id="cjc:100389093"/>
<dbReference type="eggNOG" id="KOG3378">
    <property type="taxonomic scope" value="Eukaryota"/>
</dbReference>
<dbReference type="GeneTree" id="ENSGT00940000163476"/>
<dbReference type="HOGENOM" id="CLU_003827_10_0_1"/>
<dbReference type="InParanoid" id="Q9GJS7"/>
<dbReference type="OrthoDB" id="9886081at2759"/>
<dbReference type="Proteomes" id="UP000008225">
    <property type="component" value="Chromosome 11"/>
</dbReference>
<dbReference type="Bgee" id="ENSCJAG00000020208">
    <property type="expression patterns" value="Expressed in heart and 5 other cell types or tissues"/>
</dbReference>
<dbReference type="GO" id="GO:0072562">
    <property type="term" value="C:blood microparticle"/>
    <property type="evidence" value="ECO:0007669"/>
    <property type="project" value="TreeGrafter"/>
</dbReference>
<dbReference type="GO" id="GO:0031838">
    <property type="term" value="C:haptoglobin-hemoglobin complex"/>
    <property type="evidence" value="ECO:0007669"/>
    <property type="project" value="TreeGrafter"/>
</dbReference>
<dbReference type="GO" id="GO:0005833">
    <property type="term" value="C:hemoglobin complex"/>
    <property type="evidence" value="ECO:0007669"/>
    <property type="project" value="InterPro"/>
</dbReference>
<dbReference type="GO" id="GO:0031720">
    <property type="term" value="F:haptoglobin binding"/>
    <property type="evidence" value="ECO:0007669"/>
    <property type="project" value="TreeGrafter"/>
</dbReference>
<dbReference type="GO" id="GO:0020037">
    <property type="term" value="F:heme binding"/>
    <property type="evidence" value="ECO:0007669"/>
    <property type="project" value="InterPro"/>
</dbReference>
<dbReference type="GO" id="GO:0031721">
    <property type="term" value="F:hemoglobin alpha binding"/>
    <property type="evidence" value="ECO:0007669"/>
    <property type="project" value="TreeGrafter"/>
</dbReference>
<dbReference type="GO" id="GO:0046872">
    <property type="term" value="F:metal ion binding"/>
    <property type="evidence" value="ECO:0007669"/>
    <property type="project" value="UniProtKB-KW"/>
</dbReference>
<dbReference type="GO" id="GO:0043177">
    <property type="term" value="F:organic acid binding"/>
    <property type="evidence" value="ECO:0007669"/>
    <property type="project" value="TreeGrafter"/>
</dbReference>
<dbReference type="GO" id="GO:0019825">
    <property type="term" value="F:oxygen binding"/>
    <property type="evidence" value="ECO:0007669"/>
    <property type="project" value="InterPro"/>
</dbReference>
<dbReference type="GO" id="GO:0005344">
    <property type="term" value="F:oxygen carrier activity"/>
    <property type="evidence" value="ECO:0007669"/>
    <property type="project" value="UniProtKB-KW"/>
</dbReference>
<dbReference type="GO" id="GO:0004601">
    <property type="term" value="F:peroxidase activity"/>
    <property type="evidence" value="ECO:0007669"/>
    <property type="project" value="TreeGrafter"/>
</dbReference>
<dbReference type="GO" id="GO:0042744">
    <property type="term" value="P:hydrogen peroxide catabolic process"/>
    <property type="evidence" value="ECO:0007669"/>
    <property type="project" value="TreeGrafter"/>
</dbReference>
<dbReference type="CDD" id="cd08925">
    <property type="entry name" value="Hb-beta-like"/>
    <property type="match status" value="1"/>
</dbReference>
<dbReference type="FunFam" id="1.10.490.10:FF:000001">
    <property type="entry name" value="Hemoglobin subunit beta"/>
    <property type="match status" value="1"/>
</dbReference>
<dbReference type="Gene3D" id="1.10.490.10">
    <property type="entry name" value="Globins"/>
    <property type="match status" value="1"/>
</dbReference>
<dbReference type="InterPro" id="IPR000971">
    <property type="entry name" value="Globin"/>
</dbReference>
<dbReference type="InterPro" id="IPR009050">
    <property type="entry name" value="Globin-like_sf"/>
</dbReference>
<dbReference type="InterPro" id="IPR012292">
    <property type="entry name" value="Globin/Proto"/>
</dbReference>
<dbReference type="InterPro" id="IPR002337">
    <property type="entry name" value="Hemoglobin_b"/>
</dbReference>
<dbReference type="InterPro" id="IPR050056">
    <property type="entry name" value="Hemoglobin_oxygen_transport"/>
</dbReference>
<dbReference type="PANTHER" id="PTHR11442">
    <property type="entry name" value="HEMOGLOBIN FAMILY MEMBER"/>
    <property type="match status" value="1"/>
</dbReference>
<dbReference type="PANTHER" id="PTHR11442:SF52">
    <property type="entry name" value="HEMOGLOBIN SUBUNIT GAMMA-1"/>
    <property type="match status" value="1"/>
</dbReference>
<dbReference type="Pfam" id="PF00042">
    <property type="entry name" value="Globin"/>
    <property type="match status" value="1"/>
</dbReference>
<dbReference type="PRINTS" id="PR00814">
    <property type="entry name" value="BETAHAEM"/>
</dbReference>
<dbReference type="SUPFAM" id="SSF46458">
    <property type="entry name" value="Globin-like"/>
    <property type="match status" value="1"/>
</dbReference>
<dbReference type="PROSITE" id="PS01033">
    <property type="entry name" value="GLOBIN"/>
    <property type="match status" value="1"/>
</dbReference>
<reference key="1">
    <citation type="journal article" date="1997" name="Gene">
        <title>Dynamics of regulatory evolution in primate beta-globin gene clusters: cis-mediated acquisition of simian gamma fetal expression patterns.</title>
        <authorList>
            <person name="Chiu C.-H."/>
            <person name="Schneider H."/>
            <person name="Slightom J.L."/>
            <person name="Gumucio D.L."/>
            <person name="Goodman M."/>
        </authorList>
    </citation>
    <scope>NUCLEOTIDE SEQUENCE [GENOMIC DNA]</scope>
</reference>
<keyword id="KW-0349">Heme</keyword>
<keyword id="KW-0408">Iron</keyword>
<keyword id="KW-0479">Metal-binding</keyword>
<keyword id="KW-0561">Oxygen transport</keyword>
<keyword id="KW-1185">Reference proteome</keyword>
<keyword id="KW-0813">Transport</keyword>
<protein>
    <recommendedName>
        <fullName>Hemoglobin subunit gamma</fullName>
    </recommendedName>
    <alternativeName>
        <fullName>Gamma-globin</fullName>
    </alternativeName>
    <alternativeName>
        <fullName>Hemoglobin gamma chain</fullName>
    </alternativeName>
</protein>
<organism>
    <name type="scientific">Callithrix jacchus</name>
    <name type="common">White-tufted-ear marmoset</name>
    <dbReference type="NCBI Taxonomy" id="9483"/>
    <lineage>
        <taxon>Eukaryota</taxon>
        <taxon>Metazoa</taxon>
        <taxon>Chordata</taxon>
        <taxon>Craniata</taxon>
        <taxon>Vertebrata</taxon>
        <taxon>Euteleostomi</taxon>
        <taxon>Mammalia</taxon>
        <taxon>Eutheria</taxon>
        <taxon>Euarchontoglires</taxon>
        <taxon>Primates</taxon>
        <taxon>Haplorrhini</taxon>
        <taxon>Platyrrhini</taxon>
        <taxon>Cebidae</taxon>
        <taxon>Callitrichinae</taxon>
        <taxon>Callithrix</taxon>
        <taxon>Callithrix</taxon>
    </lineage>
</organism>
<evidence type="ECO:0000255" key="1">
    <source>
        <dbReference type="PROSITE-ProRule" id="PRU00238"/>
    </source>
</evidence>
<name>HBG_CALJA</name>
<accession>Q9GJS7</accession>
<gene>
    <name type="primary">HBG1</name>
</gene>
<gene>
    <name type="primary">HBG2</name>
</gene>
<sequence>MSNFTAEDKAAITSLWAKVNVEDAGGETLGRLLVVYPWTQRFFDSFGSLSSPSAIMGNPKVKAHGVKVLTSLGEAIKNLDDLKGTFGQLSELHCDKLHVDPENFRLLGNVLVTVLAILYGKEFTPEVQASWQKMVAGVASALASRYH</sequence>
<proteinExistence type="evidence at transcript level"/>
<comment type="function">
    <text>Gamma chains make up the fetal hemoglobin F, in combination with alpha chains.</text>
</comment>
<comment type="subunit">
    <text>Heterotetramer of two alpha chains and two gamma chains in fetal hemoglobin (Hb F).</text>
</comment>
<comment type="tissue specificity">
    <text>Red blood cells.</text>
</comment>
<comment type="similarity">
    <text evidence="1">Belongs to the globin family.</text>
</comment>
<feature type="chain" id="PRO_0000053241" description="Hemoglobin subunit gamma">
    <location>
        <begin position="1"/>
        <end position="147"/>
    </location>
</feature>
<feature type="domain" description="Globin" evidence="1">
    <location>
        <begin position="3"/>
        <end position="147"/>
    </location>
</feature>
<feature type="binding site" description="distal binding residue" evidence="1">
    <location>
        <position position="64"/>
    </location>
    <ligand>
        <name>heme b</name>
        <dbReference type="ChEBI" id="CHEBI:60344"/>
    </ligand>
    <ligandPart>
        <name>Fe</name>
        <dbReference type="ChEBI" id="CHEBI:18248"/>
    </ligandPart>
</feature>
<feature type="binding site" description="proximal binding residue" evidence="1">
    <location>
        <position position="93"/>
    </location>
    <ligand>
        <name>heme b</name>
        <dbReference type="ChEBI" id="CHEBI:60344"/>
    </ligand>
    <ligandPart>
        <name>Fe</name>
        <dbReference type="ChEBI" id="CHEBI:18248"/>
    </ligandPart>
</feature>